<keyword id="KW-0963">Cytoplasm</keyword>
<keyword id="KW-0648">Protein biosynthesis</keyword>
<keyword id="KW-1185">Reference proteome</keyword>
<protein>
    <recommendedName>
        <fullName evidence="1">Ribosome-recycling factor</fullName>
        <shortName evidence="1">RRF</shortName>
    </recommendedName>
    <alternativeName>
        <fullName evidence="1">Ribosome-releasing factor</fullName>
    </alternativeName>
</protein>
<reference key="1">
    <citation type="journal article" date="2010" name="J. Bacteriol.">
        <title>Genome sequence of the dioxin-mineralizing bacterium Sphingomonas wittichii RW1.</title>
        <authorList>
            <person name="Miller T.R."/>
            <person name="Delcher A.L."/>
            <person name="Salzberg S.L."/>
            <person name="Saunders E."/>
            <person name="Detter J.C."/>
            <person name="Halden R.U."/>
        </authorList>
    </citation>
    <scope>NUCLEOTIDE SEQUENCE [LARGE SCALE GENOMIC DNA]</scope>
    <source>
        <strain>DSM 6014 / CCUG 31198 / JCM 15750 / NBRC 105917 / EY 4224 / RW1</strain>
    </source>
</reference>
<dbReference type="EMBL" id="CP000699">
    <property type="protein sequence ID" value="ABQ66831.1"/>
    <property type="molecule type" value="Genomic_DNA"/>
</dbReference>
<dbReference type="SMR" id="A5V3G5"/>
<dbReference type="STRING" id="392499.Swit_0463"/>
<dbReference type="PaxDb" id="392499-Swit_0463"/>
<dbReference type="KEGG" id="swi:Swit_0463"/>
<dbReference type="eggNOG" id="COG0233">
    <property type="taxonomic scope" value="Bacteria"/>
</dbReference>
<dbReference type="HOGENOM" id="CLU_073981_2_0_5"/>
<dbReference type="OrthoDB" id="9804006at2"/>
<dbReference type="Proteomes" id="UP000001989">
    <property type="component" value="Chromosome"/>
</dbReference>
<dbReference type="GO" id="GO:0005829">
    <property type="term" value="C:cytosol"/>
    <property type="evidence" value="ECO:0007669"/>
    <property type="project" value="GOC"/>
</dbReference>
<dbReference type="GO" id="GO:0043023">
    <property type="term" value="F:ribosomal large subunit binding"/>
    <property type="evidence" value="ECO:0007669"/>
    <property type="project" value="TreeGrafter"/>
</dbReference>
<dbReference type="GO" id="GO:0002184">
    <property type="term" value="P:cytoplasmic translational termination"/>
    <property type="evidence" value="ECO:0007669"/>
    <property type="project" value="TreeGrafter"/>
</dbReference>
<dbReference type="CDD" id="cd00520">
    <property type="entry name" value="RRF"/>
    <property type="match status" value="1"/>
</dbReference>
<dbReference type="FunFam" id="1.10.132.20:FF:000001">
    <property type="entry name" value="Ribosome-recycling factor"/>
    <property type="match status" value="1"/>
</dbReference>
<dbReference type="FunFam" id="3.30.1360.40:FF:000001">
    <property type="entry name" value="Ribosome-recycling factor"/>
    <property type="match status" value="1"/>
</dbReference>
<dbReference type="Gene3D" id="3.30.1360.40">
    <property type="match status" value="1"/>
</dbReference>
<dbReference type="Gene3D" id="1.10.132.20">
    <property type="entry name" value="Ribosome-recycling factor"/>
    <property type="match status" value="1"/>
</dbReference>
<dbReference type="HAMAP" id="MF_00040">
    <property type="entry name" value="RRF"/>
    <property type="match status" value="1"/>
</dbReference>
<dbReference type="InterPro" id="IPR002661">
    <property type="entry name" value="Ribosome_recyc_fac"/>
</dbReference>
<dbReference type="InterPro" id="IPR023584">
    <property type="entry name" value="Ribosome_recyc_fac_dom"/>
</dbReference>
<dbReference type="InterPro" id="IPR036191">
    <property type="entry name" value="RRF_sf"/>
</dbReference>
<dbReference type="NCBIfam" id="TIGR00496">
    <property type="entry name" value="frr"/>
    <property type="match status" value="1"/>
</dbReference>
<dbReference type="PANTHER" id="PTHR20982:SF3">
    <property type="entry name" value="MITOCHONDRIAL RIBOSOME RECYCLING FACTOR PSEUDO 1"/>
    <property type="match status" value="1"/>
</dbReference>
<dbReference type="PANTHER" id="PTHR20982">
    <property type="entry name" value="RIBOSOME RECYCLING FACTOR"/>
    <property type="match status" value="1"/>
</dbReference>
<dbReference type="Pfam" id="PF01765">
    <property type="entry name" value="RRF"/>
    <property type="match status" value="1"/>
</dbReference>
<dbReference type="SUPFAM" id="SSF55194">
    <property type="entry name" value="Ribosome recycling factor, RRF"/>
    <property type="match status" value="1"/>
</dbReference>
<name>RRF_RHIWR</name>
<accession>A5V3G5</accession>
<evidence type="ECO:0000255" key="1">
    <source>
        <dbReference type="HAMAP-Rule" id="MF_00040"/>
    </source>
</evidence>
<evidence type="ECO:0000256" key="2">
    <source>
        <dbReference type="SAM" id="MobiDB-lite"/>
    </source>
</evidence>
<gene>
    <name evidence="1" type="primary">frr</name>
    <name type="ordered locus">Swit_0463</name>
</gene>
<proteinExistence type="inferred from homology"/>
<feature type="chain" id="PRO_1000003274" description="Ribosome-recycling factor">
    <location>
        <begin position="1"/>
        <end position="185"/>
    </location>
</feature>
<feature type="region of interest" description="Disordered" evidence="2">
    <location>
        <begin position="136"/>
        <end position="161"/>
    </location>
</feature>
<comment type="function">
    <text evidence="1">Responsible for the release of ribosomes from messenger RNA at the termination of protein biosynthesis. May increase the efficiency of translation by recycling ribosomes from one round of translation to another.</text>
</comment>
<comment type="subcellular location">
    <subcellularLocation>
        <location evidence="1">Cytoplasm</location>
    </subcellularLocation>
</comment>
<comment type="similarity">
    <text evidence="1">Belongs to the RRF family.</text>
</comment>
<sequence>MPAYDKADLERRMHGAVEALKSDLTGLRTGRASVNLLDPVTVEIYGAHMPLNQAATVTAPEPRMLSVQVWDRSNVGPVDKAIRSAGLGLNPIVDGQTLRIPIPDLTEERRKELAKLASQYAEKARVAVRNVRRDGMDSLKTDEKKGEIGEDDRKRRETEVQKLTDATISDVDAAAAAKEKEILGK</sequence>
<organism>
    <name type="scientific">Rhizorhabdus wittichii (strain DSM 6014 / CCUG 31198 / JCM 15750 / NBRC 105917 / EY 4224 / RW1)</name>
    <name type="common">Sphingomonas wittichii</name>
    <dbReference type="NCBI Taxonomy" id="392499"/>
    <lineage>
        <taxon>Bacteria</taxon>
        <taxon>Pseudomonadati</taxon>
        <taxon>Pseudomonadota</taxon>
        <taxon>Alphaproteobacteria</taxon>
        <taxon>Sphingomonadales</taxon>
        <taxon>Sphingomonadaceae</taxon>
        <taxon>Rhizorhabdus</taxon>
    </lineage>
</organism>